<reference key="1">
    <citation type="journal article" date="2011" name="PLoS Pathog.">
        <title>Genomic and proteomic analyses of the fungus Arthrobotrys oligospora provide insights into nematode-trap formation.</title>
        <authorList>
            <person name="Yang J."/>
            <person name="Wang L."/>
            <person name="Ji X."/>
            <person name="Feng Y."/>
            <person name="Li X."/>
            <person name="Zou C."/>
            <person name="Xu J."/>
            <person name="Ren Y."/>
            <person name="Mi Q."/>
            <person name="Wu J."/>
            <person name="Liu S."/>
            <person name="Liu Y."/>
            <person name="Huang X."/>
            <person name="Wang H."/>
            <person name="Niu X."/>
            <person name="Li J."/>
            <person name="Liang L."/>
            <person name="Luo Y."/>
            <person name="Ji K."/>
            <person name="Zhou W."/>
            <person name="Yu Z."/>
            <person name="Li G."/>
            <person name="Liu Y."/>
            <person name="Li L."/>
            <person name="Qiao M."/>
            <person name="Feng L."/>
            <person name="Zhang K.-Q."/>
        </authorList>
    </citation>
    <scope>NUCLEOTIDE SEQUENCE [LARGE SCALE GENOMIC DNA]</scope>
    <source>
        <strain>ATCC 24927 / CBS 115.81 / DSM 1491</strain>
    </source>
</reference>
<reference key="2">
    <citation type="journal article" date="2021" name="J. Agric. Food Chem.">
        <title>Polyketide synthase-terpenoid synthase hybrid pathway regulation of trap formation through ammonia metabolism controls soil colonization of predominant nematode-trapping fungus.</title>
        <authorList>
            <person name="He Z.Q."/>
            <person name="Wang L.J."/>
            <person name="Wang Y.J."/>
            <person name="Chen Y.H."/>
            <person name="Wen Y."/>
            <person name="Zhang K.Q."/>
            <person name="Niu X.M."/>
        </authorList>
    </citation>
    <scope>FUNCTION</scope>
    <scope>DISRUPTION PHENOTYPE</scope>
    <scope>PATHWAY</scope>
</reference>
<reference key="3">
    <citation type="journal article" date="2022" name="J. Fungi">
        <title>The multifaceted gene 275 embedded in the PKS-PTS gene cluster was involved in the regulation of arthrobotrisin biosynthesis, TCA cycle, and septa formation in nematode-trapping fungus Arthrobotrys oligospora.</title>
        <authorList>
            <person name="Zhou J."/>
            <person name="Wu Q.F."/>
            <person name="Li S.H."/>
            <person name="Yan J.X."/>
            <person name="Wu L."/>
            <person name="Cheng Q.Y."/>
            <person name="He Z.Q."/>
            <person name="Yue X.T."/>
            <person name="Zhang K.Q."/>
            <person name="Zhang L.L."/>
            <person name="Niu X.M."/>
        </authorList>
    </citation>
    <scope>INDUCTION</scope>
</reference>
<reference key="4">
    <citation type="journal article" date="2025" name="J. Adv. Res.">
        <title>Identification of a transcription factor AoMsn2 of the Hog1 signaling pathway contributes to fungal growth, development and pathogenicity in Arthrobotrys oligospora.</title>
        <authorList>
            <person name="Liu Q."/>
            <person name="Jiang K."/>
            <person name="Duan S."/>
            <person name="Zhao N."/>
            <person name="Shen Y."/>
            <person name="Zhu L."/>
            <person name="Zhang K.Q."/>
            <person name="Yang J."/>
        </authorList>
    </citation>
    <scope>INDUCTION</scope>
</reference>
<dbReference type="EC" id="1.-.-.-" evidence="7"/>
<dbReference type="EMBL" id="ADOT01000316">
    <property type="protein sequence ID" value="EGX43541.1"/>
    <property type="molecule type" value="Genomic_DNA"/>
</dbReference>
<dbReference type="RefSeq" id="XP_011127781.1">
    <property type="nucleotide sequence ID" value="XM_011129479.1"/>
</dbReference>
<dbReference type="STRING" id="756982.G1XTZ8"/>
<dbReference type="GeneID" id="22898687"/>
<dbReference type="eggNOG" id="ENOG502SCP9">
    <property type="taxonomic scope" value="Eukaryota"/>
</dbReference>
<dbReference type="HOGENOM" id="CLU_068080_1_0_1"/>
<dbReference type="InParanoid" id="G1XTZ8"/>
<dbReference type="OMA" id="APFYPEW"/>
<dbReference type="OrthoDB" id="1946038at4890"/>
<dbReference type="UniPathway" id="UPA00213"/>
<dbReference type="Proteomes" id="UP000008784">
    <property type="component" value="Unassembled WGS sequence"/>
</dbReference>
<dbReference type="GO" id="GO:0016020">
    <property type="term" value="C:membrane"/>
    <property type="evidence" value="ECO:0007669"/>
    <property type="project" value="UniProtKB-SubCell"/>
</dbReference>
<dbReference type="GO" id="GO:0016491">
    <property type="term" value="F:oxidoreductase activity"/>
    <property type="evidence" value="ECO:0007669"/>
    <property type="project" value="UniProtKB-KW"/>
</dbReference>
<dbReference type="GO" id="GO:0016114">
    <property type="term" value="P:terpenoid biosynthetic process"/>
    <property type="evidence" value="ECO:0007669"/>
    <property type="project" value="UniProtKB-UniPathway"/>
</dbReference>
<dbReference type="CDD" id="cd02208">
    <property type="entry name" value="cupin_RmlC-like"/>
    <property type="match status" value="1"/>
</dbReference>
<dbReference type="Gene3D" id="2.60.120.10">
    <property type="entry name" value="Jelly Rolls"/>
    <property type="match status" value="1"/>
</dbReference>
<dbReference type="InterPro" id="IPR013096">
    <property type="entry name" value="Cupin_2"/>
</dbReference>
<dbReference type="InterPro" id="IPR014710">
    <property type="entry name" value="RmlC-like_jellyroll"/>
</dbReference>
<dbReference type="InterPro" id="IPR011051">
    <property type="entry name" value="RmlC_Cupin_sf"/>
</dbReference>
<dbReference type="Pfam" id="PF07883">
    <property type="entry name" value="Cupin_2"/>
    <property type="match status" value="1"/>
</dbReference>
<dbReference type="SUPFAM" id="SSF51182">
    <property type="entry name" value="RmlC-like cupins"/>
    <property type="match status" value="1"/>
</dbReference>
<proteinExistence type="evidence at transcript level"/>
<evidence type="ECO:0000255" key="1"/>
<evidence type="ECO:0000269" key="2">
    <source>
    </source>
</evidence>
<evidence type="ECO:0000269" key="3">
    <source>
    </source>
</evidence>
<evidence type="ECO:0000269" key="4">
    <source>
    </source>
</evidence>
<evidence type="ECO:0000303" key="5">
    <source>
    </source>
</evidence>
<evidence type="ECO:0000305" key="6"/>
<evidence type="ECO:0000305" key="7">
    <source>
    </source>
</evidence>
<protein>
    <recommendedName>
        <fullName evidence="5">Oxidoreductase AOL_s00215g277</fullName>
        <ecNumber evidence="7">1.-.-.-</ecNumber>
    </recommendedName>
    <alternativeName>
        <fullName evidence="5">Sesquiterpenyl epoxy-cyclohexenoids cluster protein AOL_s00215g277</fullName>
        <shortName evidence="5">SECs cluster protein AOL_s00215g277</shortName>
    </alternativeName>
</protein>
<gene>
    <name type="ORF">AOL_s00215g277</name>
</gene>
<keyword id="KW-0472">Membrane</keyword>
<keyword id="KW-0560">Oxidoreductase</keyword>
<keyword id="KW-1185">Reference proteome</keyword>
<keyword id="KW-0812">Transmembrane</keyword>
<keyword id="KW-1133">Transmembrane helix</keyword>
<comment type="function">
    <text evidence="2 7">Oxidoreductase; part of the gene cluster that mediates the biosynthesis of sesquiterpenyl epoxy-cyclohexenoids (SECs) such as anthrobotrisins and arthrosporols, metabolites that possess a novel hybrid carbon skeleton consisting of a polyketide-derived epoxycyclohexenol combined with a terpenoid-derived monocyclic sesquiterpenol substructure (PKS-PTS hybrid) (PubMed:33823587). The SEC pathway plays an important role for fungal soil colonization via decreasing fungal nematode-capturing ability (PubMed:33823587). Within the pathway, the oxidoreductase AOL_s00215g277 seems to play a role in the farnesylation step of toluquinol to produce farnesyl hydroquinone, the hybrid precursor for biosynthesis of SECs (PubMed:33823587). The pathway begins with the biosynthesis of 6-methylsalicylic acid (6-MSA), the first precursor of the polyketide-derived epoxycyclohexenol in arthrosporols, by the polyketide synthase (PKS) AOL_s00215g283 via condensation of 1 acetate and 3 malonate units. The 6-methylsalicylic acid decarboxylase AOL_s00215g281 then catalyzes the decarboxylation of 6-methylsalicylic acid to yield m-cresol. The cytochrome P450 monooxygenase AOL_s00215g282 further oxidizes m-cresol to yield toluquinol. With the assistance of the oxidoreductase AOL_s00215g277, the polyprenyl transferase AOL_s00215g276 catalyzes the farnesylation of toluquinol to produce farnesyl hydroquinone, the hybrid precursor for biosynthesis of SECs. Farnesyl hydroquinone undergoes epoxidation and then subsequent dehydrogenation to form farnesyl epoxy-quinone, the first and simplest SEC. The cytochrome P450 monooxygenase AOL_s00215g278 and the FAD-dependent monooxygenase AOL_s00215g279 might be involved in the oxygenation of the phenol moiety, most likely in the epoxy formation. The cytochrome P450 monooxygenases AOL_s00215g274 and AOL_s00215g280 are involved in specific regional ketone reductions at respectively C-4 and C-1 of farnesyl epoxy-quinone PubMed:33823587 (Probable).</text>
</comment>
<comment type="pathway">
    <text evidence="2">Secondary metabolite biosynthesis; terpenoid biosynthesis.</text>
</comment>
<comment type="subcellular location">
    <subcellularLocation>
        <location evidence="1">Membrane</location>
        <topology evidence="1">Single-pass membrane protein</topology>
    </subcellularLocation>
</comment>
<comment type="induction">
    <text evidence="3 4">Expression is down-regulated by the cluster-specific transcription factor AOL_s00215g275 (PubMed:36547594). Expression is also down-regulated by the HOG1-MAPK pathway downstream transcription factor MSN2 (PubMed:38331317).</text>
</comment>
<comment type="disruption phenotype">
    <text evidence="2">Abolishes the production of arthrobotrisins A to D (PubMed:33823587). Shows significantly increased ammonia levels in fungal mycelia (PubMed:33823587).</text>
</comment>
<comment type="similarity">
    <text evidence="6">Belongs to the oxidoreductase OpS7 family.</text>
</comment>
<sequence length="253" mass="29028">MAPCIPKKYTAGQNPVTKFEGAFVVTKMDPPEGRCFLFHTVINVNHHRVKALEKSGKKPPKHFHPNQYEYFKVISGQLTVEINDVEHILTPEDGEVTLEPGPHHRLWGTPGQKNDKVVFLISASTNARSYQLDQAFFENWYGYQEDMMMRGTAPDLIQVCCMFEAGDSYLSPPWWVPFRHFFGYWLTVILGYYIGSLLGYQPFFPEWTTDWDAACDKMASSLLQKKFAIRELQDVVKKNFDANGDPLPAKKLL</sequence>
<organism>
    <name type="scientific">Arthrobotrys oligospora (strain ATCC 24927 / CBS 115.81 / DSM 1491)</name>
    <name type="common">Nematode-trapping fungus</name>
    <name type="synonym">Didymozoophaga oligospora</name>
    <dbReference type="NCBI Taxonomy" id="756982"/>
    <lineage>
        <taxon>Eukaryota</taxon>
        <taxon>Fungi</taxon>
        <taxon>Dikarya</taxon>
        <taxon>Ascomycota</taxon>
        <taxon>Pezizomycotina</taxon>
        <taxon>Orbiliomycetes</taxon>
        <taxon>Orbiliales</taxon>
        <taxon>Orbiliaceae</taxon>
        <taxon>Orbilia</taxon>
        <taxon>Orbilia oligospora</taxon>
    </lineage>
</organism>
<feature type="chain" id="PRO_0000457841" description="Oxidoreductase AOL_s00215g277">
    <location>
        <begin position="1"/>
        <end position="253"/>
    </location>
</feature>
<feature type="transmembrane region" description="Helical" evidence="1">
    <location>
        <begin position="181"/>
        <end position="203"/>
    </location>
</feature>
<accession>G1XTZ8</accession>
<name>AR277_ARTOA</name>